<proteinExistence type="evidence at protein level"/>
<comment type="function">
    <text evidence="1">GTP-binding protein involved in nucleocytoplasmic transport. Required for the import of protein into the nucleus and also for RNA export. Involved in chromatin condensation and control of cell cycle (By similarity).</text>
</comment>
<comment type="subunit">
    <text evidence="2 6 7">Found in a nuclear export complex with RanGTP, exportin and pre-miRNA (By similarity). Interacts with RanBP1a and RanBP1b (PubMed:9025305). Interacts with KPNB1 (PubMed:23582042).</text>
</comment>
<comment type="subcellular location">
    <subcellularLocation>
        <location evidence="1">Nucleus</location>
    </subcellularLocation>
</comment>
<comment type="induction">
    <text evidence="5">Induced by salt treatment. Regulated by light.</text>
</comment>
<comment type="similarity">
    <text evidence="3 8">Belongs to the small GTPase superfamily. Ran family.</text>
</comment>
<name>RAN3_ARATH</name>
<accession>Q8H156</accession>
<accession>O04148</accession>
<accession>O04664</accession>
<accession>O22495</accession>
<organism>
    <name type="scientific">Arabidopsis thaliana</name>
    <name type="common">Mouse-ear cress</name>
    <dbReference type="NCBI Taxonomy" id="3702"/>
    <lineage>
        <taxon>Eukaryota</taxon>
        <taxon>Viridiplantae</taxon>
        <taxon>Streptophyta</taxon>
        <taxon>Embryophyta</taxon>
        <taxon>Tracheophyta</taxon>
        <taxon>Spermatophyta</taxon>
        <taxon>Magnoliopsida</taxon>
        <taxon>eudicotyledons</taxon>
        <taxon>Gunneridae</taxon>
        <taxon>Pentapetalae</taxon>
        <taxon>rosids</taxon>
        <taxon>malvids</taxon>
        <taxon>Brassicales</taxon>
        <taxon>Brassicaceae</taxon>
        <taxon>Camelineae</taxon>
        <taxon>Arabidopsis</taxon>
    </lineage>
</organism>
<evidence type="ECO:0000250" key="1"/>
<evidence type="ECO:0000250" key="2">
    <source>
        <dbReference type="UniProtKB" id="P62825"/>
    </source>
</evidence>
<evidence type="ECO:0000255" key="3">
    <source>
        <dbReference type="PROSITE-ProRule" id="PRU00752"/>
    </source>
</evidence>
<evidence type="ECO:0000256" key="4">
    <source>
        <dbReference type="SAM" id="MobiDB-lite"/>
    </source>
</evidence>
<evidence type="ECO:0000269" key="5">
    <source>
    </source>
</evidence>
<evidence type="ECO:0000269" key="6">
    <source>
    </source>
</evidence>
<evidence type="ECO:0000269" key="7">
    <source>
    </source>
</evidence>
<evidence type="ECO:0000305" key="8"/>
<feature type="chain" id="PRO_0000208719" description="GTP-binding nuclear protein Ran-3">
    <location>
        <begin position="1"/>
        <end position="221"/>
    </location>
</feature>
<feature type="domain" description="Small GTPase Ran-type" evidence="3">
    <location>
        <begin position="10"/>
        <end position="174"/>
    </location>
</feature>
<feature type="region of interest" description="Switch-I" evidence="3">
    <location>
        <begin position="40"/>
        <end position="48"/>
    </location>
</feature>
<feature type="region of interest" description="Switch-II" evidence="3">
    <location>
        <begin position="71"/>
        <end position="87"/>
    </location>
</feature>
<feature type="region of interest" description="Disordered" evidence="4">
    <location>
        <begin position="201"/>
        <end position="221"/>
    </location>
</feature>
<feature type="binding site" evidence="2">
    <location>
        <begin position="21"/>
        <end position="28"/>
    </location>
    <ligand>
        <name>GTP</name>
        <dbReference type="ChEBI" id="CHEBI:37565"/>
    </ligand>
</feature>
<feature type="binding site" evidence="2">
    <location>
        <position position="71"/>
    </location>
    <ligand>
        <name>GTP</name>
        <dbReference type="ChEBI" id="CHEBI:37565"/>
    </ligand>
</feature>
<feature type="binding site" evidence="2">
    <location>
        <begin position="125"/>
        <end position="128"/>
    </location>
    <ligand>
        <name>GTP</name>
        <dbReference type="ChEBI" id="CHEBI:37565"/>
    </ligand>
</feature>
<feature type="binding site" evidence="2">
    <location>
        <begin position="153"/>
        <end position="155"/>
    </location>
    <ligand>
        <name>GTP</name>
        <dbReference type="ChEBI" id="CHEBI:37565"/>
    </ligand>
</feature>
<feature type="sequence conflict" description="In Ref. 1; CAA66049." evidence="8" ref="1">
    <original>F</original>
    <variation>P</variation>
    <location>
        <position position="38"/>
    </location>
</feature>
<feature type="sequence conflict" description="In Ref. 3; AAC34900/AAB97312." evidence="8" ref="3">
    <original>L</original>
    <variation>P</variation>
    <location>
        <position position="53"/>
    </location>
</feature>
<feature type="sequence conflict" description="In Ref. 6; AAN31865." evidence="8" ref="6">
    <original>D</original>
    <variation>E</variation>
    <location>
        <position position="80"/>
    </location>
</feature>
<feature type="sequence conflict" description="In Ref. 3; AAC34900/AAB97312." evidence="8" ref="3">
    <original>K</original>
    <variation>R</variation>
    <location>
        <position position="102"/>
    </location>
</feature>
<feature type="sequence conflict" description="In Ref. 3; AAC34900/AAB97312." evidence="8" ref="3">
    <original>KN</original>
    <variation>EE</variation>
    <location>
        <begin position="145"/>
        <end position="146"/>
    </location>
</feature>
<feature type="sequence conflict" description="In Ref. 1; CAA66049." evidence="8" ref="1">
    <original>Q</original>
    <variation>R</variation>
    <location>
        <position position="199"/>
    </location>
</feature>
<feature type="sequence conflict" description="In Ref. 1; CAA66049." evidence="8" ref="1">
    <original>EL</original>
    <variation>DV</variation>
    <location>
        <begin position="203"/>
        <end position="204"/>
    </location>
</feature>
<keyword id="KW-0342">GTP-binding</keyword>
<keyword id="KW-0547">Nucleotide-binding</keyword>
<keyword id="KW-0539">Nucleus</keyword>
<keyword id="KW-0653">Protein transport</keyword>
<keyword id="KW-1185">Reference proteome</keyword>
<keyword id="KW-0813">Transport</keyword>
<protein>
    <recommendedName>
        <fullName>GTP-binding nuclear protein Ran-3</fullName>
    </recommendedName>
    <alternativeName>
        <fullName>Ras-related nuclear protein 3</fullName>
    </alternativeName>
</protein>
<reference key="1">
    <citation type="journal article" date="1997" name="Plant J.">
        <title>Characterization of proteins that interact with the GTP-bound form of the regulatory GTPase Ran in Arabidopsis.</title>
        <authorList>
            <person name="Haizel T."/>
            <person name="Merkle T."/>
            <person name="Pay A."/>
            <person name="Fejes E."/>
            <person name="Nagy F."/>
        </authorList>
    </citation>
    <scope>NUCLEOTIDE SEQUENCE [MRNA]</scope>
    <scope>INTERACTION WITH RANBP1A AND RANBP1B</scope>
</reference>
<reference key="2">
    <citation type="submission" date="1996-10" db="EMBL/GenBank/DDBJ databases">
        <title>A new member of the Ran-GTPases in Arabidopsis thaliana.</title>
        <authorList>
            <person name="Bischoff F."/>
            <person name="Palme K."/>
        </authorList>
    </citation>
    <scope>NUCLEOTIDE SEQUENCE [MRNA]</scope>
    <source>
        <strain>cv. Columbia</strain>
    </source>
</reference>
<reference key="3">
    <citation type="submission" date="1998-09" db="EMBL/GenBank/DDBJ databases">
        <title>Isolation of salt stress inducible Ran1 isoform.</title>
        <authorList>
            <person name="Pih K.T."/>
            <person name="Park J.M."/>
            <person name="Jang H.J."/>
            <person name="Kang S.G."/>
            <person name="Piao H.L."/>
            <person name="Hwang I.H."/>
        </authorList>
    </citation>
    <scope>NUCLEOTIDE SEQUENCE [MRNA]</scope>
    <source>
        <strain>cv. Columbia</strain>
    </source>
</reference>
<reference key="4">
    <citation type="journal article" date="1998" name="DNA Res.">
        <title>Structural analysis of Arabidopsis thaliana chromosome 5. IV. Sequence features of the regions of 1,456,315 bp covered by nineteen physically assigned P1 and TAC clones.</title>
        <authorList>
            <person name="Sato S."/>
            <person name="Kaneko T."/>
            <person name="Kotani H."/>
            <person name="Nakamura Y."/>
            <person name="Asamizu E."/>
            <person name="Miyajima N."/>
            <person name="Tabata S."/>
        </authorList>
    </citation>
    <scope>NUCLEOTIDE SEQUENCE [LARGE SCALE GENOMIC DNA]</scope>
    <source>
        <strain>cv. Columbia</strain>
    </source>
</reference>
<reference key="5">
    <citation type="journal article" date="2017" name="Plant J.">
        <title>Araport11: a complete reannotation of the Arabidopsis thaliana reference genome.</title>
        <authorList>
            <person name="Cheng C.Y."/>
            <person name="Krishnakumar V."/>
            <person name="Chan A.P."/>
            <person name="Thibaud-Nissen F."/>
            <person name="Schobel S."/>
            <person name="Town C.D."/>
        </authorList>
    </citation>
    <scope>GENOME REANNOTATION</scope>
    <source>
        <strain>cv. Columbia</strain>
    </source>
</reference>
<reference key="6">
    <citation type="journal article" date="2003" name="Science">
        <title>Empirical analysis of transcriptional activity in the Arabidopsis genome.</title>
        <authorList>
            <person name="Yamada K."/>
            <person name="Lim J."/>
            <person name="Dale J.M."/>
            <person name="Chen H."/>
            <person name="Shinn P."/>
            <person name="Palm C.J."/>
            <person name="Southwick A.M."/>
            <person name="Wu H.C."/>
            <person name="Kim C.J."/>
            <person name="Nguyen M."/>
            <person name="Pham P.K."/>
            <person name="Cheuk R.F."/>
            <person name="Karlin-Newmann G."/>
            <person name="Liu S.X."/>
            <person name="Lam B."/>
            <person name="Sakano H."/>
            <person name="Wu T."/>
            <person name="Yu G."/>
            <person name="Miranda M."/>
            <person name="Quach H.L."/>
            <person name="Tripp M."/>
            <person name="Chang C.H."/>
            <person name="Lee J.M."/>
            <person name="Toriumi M.J."/>
            <person name="Chan M.M."/>
            <person name="Tang C.C."/>
            <person name="Onodera C.S."/>
            <person name="Deng J.M."/>
            <person name="Akiyama K."/>
            <person name="Ansari Y."/>
            <person name="Arakawa T."/>
            <person name="Banh J."/>
            <person name="Banno F."/>
            <person name="Bowser L."/>
            <person name="Brooks S.Y."/>
            <person name="Carninci P."/>
            <person name="Chao Q."/>
            <person name="Choy N."/>
            <person name="Enju A."/>
            <person name="Goldsmith A.D."/>
            <person name="Gurjal M."/>
            <person name="Hansen N.F."/>
            <person name="Hayashizaki Y."/>
            <person name="Johnson-Hopson C."/>
            <person name="Hsuan V.W."/>
            <person name="Iida K."/>
            <person name="Karnes M."/>
            <person name="Khan S."/>
            <person name="Koesema E."/>
            <person name="Ishida J."/>
            <person name="Jiang P.X."/>
            <person name="Jones T."/>
            <person name="Kawai J."/>
            <person name="Kamiya A."/>
            <person name="Meyers C."/>
            <person name="Nakajima M."/>
            <person name="Narusaka M."/>
            <person name="Seki M."/>
            <person name="Sakurai T."/>
            <person name="Satou M."/>
            <person name="Tamse R."/>
            <person name="Vaysberg M."/>
            <person name="Wallender E.K."/>
            <person name="Wong C."/>
            <person name="Yamamura Y."/>
            <person name="Yuan S."/>
            <person name="Shinozaki K."/>
            <person name="Davis R.W."/>
            <person name="Theologis A."/>
            <person name="Ecker J.R."/>
        </authorList>
    </citation>
    <scope>NUCLEOTIDE SEQUENCE [LARGE SCALE MRNA]</scope>
    <source>
        <strain>cv. Columbia</strain>
    </source>
</reference>
<reference key="7">
    <citation type="journal article" date="2003" name="Plant Physiol.">
        <title>Analysis of the small GTPase gene superfamily of Arabidopsis.</title>
        <authorList>
            <person name="Vernoud V."/>
            <person name="Horton A.C."/>
            <person name="Yang Z."/>
            <person name="Nielsen E."/>
        </authorList>
    </citation>
    <scope>GENE FAMILY</scope>
    <scope>NOMENCLATURE</scope>
</reference>
<reference key="8">
    <citation type="journal article" date="2008" name="Planta">
        <title>Phytochrome-mediated differential gene expression of plant Ran/TC4 small G-proteins.</title>
        <authorList>
            <person name="Lee Y."/>
            <person name="Kim M.-H."/>
            <person name="Kim S.-K."/>
            <person name="Kim S.-H."/>
        </authorList>
    </citation>
    <scope>INDUCTION</scope>
</reference>
<reference key="9">
    <citation type="journal article" date="2013" name="Plant J.">
        <title>An Arabidopsis homolog of importin beta1 is required for ABA response and drought tolerance.</title>
        <authorList>
            <person name="Luo Y."/>
            <person name="Wang Z."/>
            <person name="Ji H."/>
            <person name="Fang H."/>
            <person name="Wang S."/>
            <person name="Tian L."/>
            <person name="Li X."/>
        </authorList>
    </citation>
    <scope>INTERACTION WITH KPNB1</scope>
</reference>
<gene>
    <name type="primary">RAN3</name>
    <name type="ordered locus">At5g55190</name>
    <name type="ORF">MCO15.14</name>
</gene>
<sequence length="221" mass="25080">MALPNQQTVDYPSFKLVIVGDGGTGKTTFVKRHLTGEFEKKYEPTIGVEVHPLDFFTNCGKIRFYCWDTAGQEKFGGLRDGYYIHGQCAIIMFDVTARLTYKNVPTWHRDLCRVCENIPIVLCGNKVDVKNRQVKAKQVTFHRKKNLQYYEISAKSNYNFEKPFLYLARKLAGDANLHFVESPALAPPEVQIDLAAQQQHEAELAAAASQPLPDDDDDTFE</sequence>
<dbReference type="EMBL" id="X97381">
    <property type="protein sequence ID" value="CAA66049.1"/>
    <property type="molecule type" value="mRNA"/>
</dbReference>
<dbReference type="EMBL" id="U73810">
    <property type="protein sequence ID" value="AAB58478.1"/>
    <property type="molecule type" value="mRNA"/>
</dbReference>
<dbReference type="EMBL" id="U75601">
    <property type="protein sequence ID" value="AAC34900.1"/>
    <property type="molecule type" value="mRNA"/>
</dbReference>
<dbReference type="EMBL" id="AF017991">
    <property type="protein sequence ID" value="AAB97312.1"/>
    <property type="molecule type" value="mRNA"/>
</dbReference>
<dbReference type="EMBL" id="AB010071">
    <property type="protein sequence ID" value="BAB08588.1"/>
    <property type="molecule type" value="Genomic_DNA"/>
</dbReference>
<dbReference type="EMBL" id="CP002688">
    <property type="protein sequence ID" value="AED96598.1"/>
    <property type="molecule type" value="Genomic_DNA"/>
</dbReference>
<dbReference type="EMBL" id="AY042796">
    <property type="protein sequence ID" value="AAK68736.1"/>
    <property type="molecule type" value="mRNA"/>
</dbReference>
<dbReference type="EMBL" id="AY050317">
    <property type="protein sequence ID" value="AAK91334.1"/>
    <property type="molecule type" value="mRNA"/>
</dbReference>
<dbReference type="EMBL" id="AY116939">
    <property type="protein sequence ID" value="AAM51573.1"/>
    <property type="molecule type" value="mRNA"/>
</dbReference>
<dbReference type="EMBL" id="BT000723">
    <property type="protein sequence ID" value="AAN31865.1"/>
    <property type="molecule type" value="mRNA"/>
</dbReference>
<dbReference type="RefSeq" id="NP_200330.1">
    <property type="nucleotide sequence ID" value="NM_124901.5"/>
</dbReference>
<dbReference type="SMR" id="Q8H156"/>
<dbReference type="BioGRID" id="20856">
    <property type="interactions" value="8"/>
</dbReference>
<dbReference type="FunCoup" id="Q8H156">
    <property type="interactions" value="4133"/>
</dbReference>
<dbReference type="IntAct" id="Q8H156">
    <property type="interactions" value="3"/>
</dbReference>
<dbReference type="STRING" id="3702.Q8H156"/>
<dbReference type="PaxDb" id="3702-AT5G55190.1"/>
<dbReference type="EnsemblPlants" id="AT5G55190.1">
    <property type="protein sequence ID" value="AT5G55190.1"/>
    <property type="gene ID" value="AT5G55190"/>
</dbReference>
<dbReference type="GeneID" id="835612"/>
<dbReference type="Gramene" id="AT5G55190.1">
    <property type="protein sequence ID" value="AT5G55190.1"/>
    <property type="gene ID" value="AT5G55190"/>
</dbReference>
<dbReference type="KEGG" id="ath:AT5G55190"/>
<dbReference type="Araport" id="AT5G55190"/>
<dbReference type="TAIR" id="AT5G55190">
    <property type="gene designation" value="RAN3"/>
</dbReference>
<dbReference type="eggNOG" id="KOG0096">
    <property type="taxonomic scope" value="Eukaryota"/>
</dbReference>
<dbReference type="HOGENOM" id="CLU_041217_13_0_1"/>
<dbReference type="InParanoid" id="Q8H156"/>
<dbReference type="OMA" id="FNAWDTA"/>
<dbReference type="OrthoDB" id="1495777at2759"/>
<dbReference type="PhylomeDB" id="Q8H156"/>
<dbReference type="PRO" id="PR:Q8H156"/>
<dbReference type="Proteomes" id="UP000006548">
    <property type="component" value="Chromosome 5"/>
</dbReference>
<dbReference type="ExpressionAtlas" id="Q8H156">
    <property type="expression patterns" value="baseline and differential"/>
</dbReference>
<dbReference type="GO" id="GO:0005794">
    <property type="term" value="C:Golgi apparatus"/>
    <property type="evidence" value="ECO:0007005"/>
    <property type="project" value="TAIR"/>
</dbReference>
<dbReference type="GO" id="GO:0005634">
    <property type="term" value="C:nucleus"/>
    <property type="evidence" value="ECO:0007669"/>
    <property type="project" value="UniProtKB-SubCell"/>
</dbReference>
<dbReference type="GO" id="GO:0009506">
    <property type="term" value="C:plasmodesma"/>
    <property type="evidence" value="ECO:0007005"/>
    <property type="project" value="TAIR"/>
</dbReference>
<dbReference type="GO" id="GO:0009536">
    <property type="term" value="C:plastid"/>
    <property type="evidence" value="ECO:0007005"/>
    <property type="project" value="TAIR"/>
</dbReference>
<dbReference type="GO" id="GO:0005525">
    <property type="term" value="F:GTP binding"/>
    <property type="evidence" value="ECO:0000250"/>
    <property type="project" value="TAIR"/>
</dbReference>
<dbReference type="GO" id="GO:0003924">
    <property type="term" value="F:GTPase activity"/>
    <property type="evidence" value="ECO:0000250"/>
    <property type="project" value="TAIR"/>
</dbReference>
<dbReference type="GO" id="GO:0003729">
    <property type="term" value="F:mRNA binding"/>
    <property type="evidence" value="ECO:0000314"/>
    <property type="project" value="TAIR"/>
</dbReference>
<dbReference type="GO" id="GO:0006606">
    <property type="term" value="P:protein import into nucleus"/>
    <property type="evidence" value="ECO:0000304"/>
    <property type="project" value="TAIR"/>
</dbReference>
<dbReference type="CDD" id="cd00877">
    <property type="entry name" value="Ran"/>
    <property type="match status" value="1"/>
</dbReference>
<dbReference type="FunFam" id="3.40.50.300:FF:000369">
    <property type="entry name" value="GTP-binding nuclear protein"/>
    <property type="match status" value="1"/>
</dbReference>
<dbReference type="Gene3D" id="3.40.50.300">
    <property type="entry name" value="P-loop containing nucleotide triphosphate hydrolases"/>
    <property type="match status" value="1"/>
</dbReference>
<dbReference type="InterPro" id="IPR027417">
    <property type="entry name" value="P-loop_NTPase"/>
</dbReference>
<dbReference type="InterPro" id="IPR002041">
    <property type="entry name" value="Ran_GTPase"/>
</dbReference>
<dbReference type="InterPro" id="IPR005225">
    <property type="entry name" value="Small_GTP-bd"/>
</dbReference>
<dbReference type="InterPro" id="IPR001806">
    <property type="entry name" value="Small_GTPase"/>
</dbReference>
<dbReference type="NCBIfam" id="TIGR00231">
    <property type="entry name" value="small_GTP"/>
    <property type="match status" value="1"/>
</dbReference>
<dbReference type="PANTHER" id="PTHR24071:SF39">
    <property type="entry name" value="GTP-BINDING NUCLEAR PROTEIN RAN-3"/>
    <property type="match status" value="1"/>
</dbReference>
<dbReference type="PANTHER" id="PTHR24071">
    <property type="entry name" value="RAN GTPASE"/>
    <property type="match status" value="1"/>
</dbReference>
<dbReference type="Pfam" id="PF00071">
    <property type="entry name" value="Ras"/>
    <property type="match status" value="1"/>
</dbReference>
<dbReference type="PRINTS" id="PR00627">
    <property type="entry name" value="GTPRANTC4"/>
</dbReference>
<dbReference type="SMART" id="SM00175">
    <property type="entry name" value="RAB"/>
    <property type="match status" value="1"/>
</dbReference>
<dbReference type="SMART" id="SM00176">
    <property type="entry name" value="RAN"/>
    <property type="match status" value="1"/>
</dbReference>
<dbReference type="SMART" id="SM00173">
    <property type="entry name" value="RAS"/>
    <property type="match status" value="1"/>
</dbReference>
<dbReference type="SMART" id="SM00174">
    <property type="entry name" value="RHO"/>
    <property type="match status" value="1"/>
</dbReference>
<dbReference type="SUPFAM" id="SSF52540">
    <property type="entry name" value="P-loop containing nucleoside triphosphate hydrolases"/>
    <property type="match status" value="1"/>
</dbReference>
<dbReference type="PROSITE" id="PS51418">
    <property type="entry name" value="RAN"/>
    <property type="match status" value="1"/>
</dbReference>